<sequence>MSSSQVVRDSAKKLVNLLEKYPKDRIHHLVSFRDVQIARFRRVAGLPNVDDKGKSIKEKKPSLDEIKSIINRTSGPLGLNKEMLTKIQNKMVDEKFTEESINEQIRALSTIMNNKFRNYYDIGDKLYKPAGNPQYYQRLINAVDGKKKESLFTAMRTVLFGK</sequence>
<proteinExistence type="evidence at protein level"/>
<protein>
    <recommendedName>
        <fullName>Cytochrome B pre-mRNA-processing protein 6</fullName>
    </recommendedName>
</protein>
<gene>
    <name type="primary">CBP6</name>
    <name type="ordered locus">YBR120C</name>
    <name type="ORF">YBR0916</name>
</gene>
<name>CBP6_YEAST</name>
<organism>
    <name type="scientific">Saccharomyces cerevisiae (strain ATCC 204508 / S288c)</name>
    <name type="common">Baker's yeast</name>
    <dbReference type="NCBI Taxonomy" id="559292"/>
    <lineage>
        <taxon>Eukaryota</taxon>
        <taxon>Fungi</taxon>
        <taxon>Dikarya</taxon>
        <taxon>Ascomycota</taxon>
        <taxon>Saccharomycotina</taxon>
        <taxon>Saccharomycetes</taxon>
        <taxon>Saccharomycetales</taxon>
        <taxon>Saccharomycetaceae</taxon>
        <taxon>Saccharomyces</taxon>
    </lineage>
</organism>
<comment type="function">
    <text evidence="4">This protein is involved in processing of the 5' terminus and the intervening sequences of cytochrome b pre-mRNA.</text>
</comment>
<comment type="interaction">
    <interactant intactId="EBI-4142">
        <id>P07253</id>
    </interactant>
    <interactant intactId="EBI-4134">
        <id>P21560</id>
        <label>CBP3</label>
    </interactant>
    <organismsDiffer>false</organismsDiffer>
    <experiments>5</experiments>
</comment>
<comment type="subcellular location">
    <subcellularLocation>
        <location evidence="1 3">Mitochondrion</location>
    </subcellularLocation>
</comment>
<comment type="miscellaneous">
    <text evidence="2">Present with 2130 molecules/cell in log phase SD medium.</text>
</comment>
<keyword id="KW-0007">Acetylation</keyword>
<keyword id="KW-0496">Mitochondrion</keyword>
<keyword id="KW-0507">mRNA processing</keyword>
<keyword id="KW-0597">Phosphoprotein</keyword>
<keyword id="KW-1185">Reference proteome</keyword>
<evidence type="ECO:0000269" key="1">
    <source>
    </source>
</evidence>
<evidence type="ECO:0000269" key="2">
    <source>
    </source>
</evidence>
<evidence type="ECO:0000269" key="3">
    <source>
    </source>
</evidence>
<evidence type="ECO:0000269" key="4">
    <source>
    </source>
</evidence>
<evidence type="ECO:0000305" key="5"/>
<evidence type="ECO:0007744" key="6">
    <source>
    </source>
</evidence>
<evidence type="ECO:0007744" key="7">
    <source>
    </source>
</evidence>
<reference key="1">
    <citation type="journal article" date="1985" name="J. Biol. Chem.">
        <title>Assembly of the mitochondrial membrane system. CBP6, a yeast nuclear gene necessary for synthesis of cytochrome b.</title>
        <authorList>
            <person name="Dieckmann C.L."/>
            <person name="Tzagoloff A."/>
        </authorList>
    </citation>
    <scope>NUCLEOTIDE SEQUENCE [GENOMIC DNA]</scope>
    <scope>FUNCTION</scope>
</reference>
<reference key="2">
    <citation type="journal article" date="1994" name="Yeast">
        <title>Analysis of a 70 kb region on the right arm of yeast chromosome II.</title>
        <authorList>
            <person name="Mannhaupt G."/>
            <person name="Stucka R."/>
            <person name="Ehnle S."/>
            <person name="Vetter I."/>
            <person name="Feldmann H."/>
        </authorList>
    </citation>
    <scope>NUCLEOTIDE SEQUENCE [GENOMIC DNA]</scope>
    <source>
        <strain>ATCC 204508 / S288c</strain>
    </source>
</reference>
<reference key="3">
    <citation type="journal article" date="1994" name="EMBO J.">
        <title>Complete DNA sequence of yeast chromosome II.</title>
        <authorList>
            <person name="Feldmann H."/>
            <person name="Aigle M."/>
            <person name="Aljinovic G."/>
            <person name="Andre B."/>
            <person name="Baclet M.C."/>
            <person name="Barthe C."/>
            <person name="Baur A."/>
            <person name="Becam A.-M."/>
            <person name="Biteau N."/>
            <person name="Boles E."/>
            <person name="Brandt T."/>
            <person name="Brendel M."/>
            <person name="Brueckner M."/>
            <person name="Bussereau F."/>
            <person name="Christiansen C."/>
            <person name="Contreras R."/>
            <person name="Crouzet M."/>
            <person name="Cziepluch C."/>
            <person name="Demolis N."/>
            <person name="Delaveau T."/>
            <person name="Doignon F."/>
            <person name="Domdey H."/>
            <person name="Duesterhus S."/>
            <person name="Dubois E."/>
            <person name="Dujon B."/>
            <person name="El Bakkoury M."/>
            <person name="Entian K.-D."/>
            <person name="Feuermann M."/>
            <person name="Fiers W."/>
            <person name="Fobo G.M."/>
            <person name="Fritz C."/>
            <person name="Gassenhuber J."/>
            <person name="Glansdorff N."/>
            <person name="Goffeau A."/>
            <person name="Grivell L.A."/>
            <person name="de Haan M."/>
            <person name="Hein C."/>
            <person name="Herbert C.J."/>
            <person name="Hollenberg C.P."/>
            <person name="Holmstroem K."/>
            <person name="Jacq C."/>
            <person name="Jacquet M."/>
            <person name="Jauniaux J.-C."/>
            <person name="Jonniaux J.-L."/>
            <person name="Kallesoee T."/>
            <person name="Kiesau P."/>
            <person name="Kirchrath L."/>
            <person name="Koetter P."/>
            <person name="Korol S."/>
            <person name="Liebl S."/>
            <person name="Logghe M."/>
            <person name="Lohan A.J.E."/>
            <person name="Louis E.J."/>
            <person name="Li Z.Y."/>
            <person name="Maat M.J."/>
            <person name="Mallet L."/>
            <person name="Mannhaupt G."/>
            <person name="Messenguy F."/>
            <person name="Miosga T."/>
            <person name="Molemans F."/>
            <person name="Mueller S."/>
            <person name="Nasr F."/>
            <person name="Obermaier B."/>
            <person name="Perea J."/>
            <person name="Pierard A."/>
            <person name="Piravandi E."/>
            <person name="Pohl F.M."/>
            <person name="Pohl T.M."/>
            <person name="Potier S."/>
            <person name="Proft M."/>
            <person name="Purnelle B."/>
            <person name="Ramezani Rad M."/>
            <person name="Rieger M."/>
            <person name="Rose M."/>
            <person name="Schaaff-Gerstenschlaeger I."/>
            <person name="Scherens B."/>
            <person name="Schwarzlose C."/>
            <person name="Skala J."/>
            <person name="Slonimski P.P."/>
            <person name="Smits P.H.M."/>
            <person name="Souciet J.-L."/>
            <person name="Steensma H.Y."/>
            <person name="Stucka R."/>
            <person name="Urrestarazu L.A."/>
            <person name="van der Aart Q.J.M."/>
            <person name="Van Dyck L."/>
            <person name="Vassarotti A."/>
            <person name="Vetter I."/>
            <person name="Vierendeels F."/>
            <person name="Vissers S."/>
            <person name="Wagner G."/>
            <person name="de Wergifosse P."/>
            <person name="Wolfe K.H."/>
            <person name="Zagulski M."/>
            <person name="Zimmermann F.K."/>
            <person name="Mewes H.-W."/>
            <person name="Kleine K."/>
        </authorList>
    </citation>
    <scope>NUCLEOTIDE SEQUENCE [LARGE SCALE GENOMIC DNA]</scope>
    <source>
        <strain>ATCC 204508 / S288c</strain>
    </source>
</reference>
<reference key="4">
    <citation type="journal article" date="2014" name="G3 (Bethesda)">
        <title>The reference genome sequence of Saccharomyces cerevisiae: Then and now.</title>
        <authorList>
            <person name="Engel S.R."/>
            <person name="Dietrich F.S."/>
            <person name="Fisk D.G."/>
            <person name="Binkley G."/>
            <person name="Balakrishnan R."/>
            <person name="Costanzo M.C."/>
            <person name="Dwight S.S."/>
            <person name="Hitz B.C."/>
            <person name="Karra K."/>
            <person name="Nash R.S."/>
            <person name="Weng S."/>
            <person name="Wong E.D."/>
            <person name="Lloyd P."/>
            <person name="Skrzypek M.S."/>
            <person name="Miyasato S.R."/>
            <person name="Simison M."/>
            <person name="Cherry J.M."/>
        </authorList>
    </citation>
    <scope>GENOME REANNOTATION</scope>
    <source>
        <strain>ATCC 204508 / S288c</strain>
    </source>
</reference>
<reference key="5">
    <citation type="journal article" date="2007" name="Genome Res.">
        <title>Approaching a complete repository of sequence-verified protein-encoding clones for Saccharomyces cerevisiae.</title>
        <authorList>
            <person name="Hu Y."/>
            <person name="Rolfs A."/>
            <person name="Bhullar B."/>
            <person name="Murthy T.V.S."/>
            <person name="Zhu C."/>
            <person name="Berger M.F."/>
            <person name="Camargo A.A."/>
            <person name="Kelley F."/>
            <person name="McCarron S."/>
            <person name="Jepson D."/>
            <person name="Richardson A."/>
            <person name="Raphael J."/>
            <person name="Moreira D."/>
            <person name="Taycher E."/>
            <person name="Zuo D."/>
            <person name="Mohr S."/>
            <person name="Kane M.F."/>
            <person name="Williamson J."/>
            <person name="Simpson A.J.G."/>
            <person name="Bulyk M.L."/>
            <person name="Harlow E."/>
            <person name="Marsischky G."/>
            <person name="Kolodner R.D."/>
            <person name="LaBaer J."/>
        </authorList>
    </citation>
    <scope>NUCLEOTIDE SEQUENCE [GENOMIC DNA]</scope>
    <source>
        <strain>ATCC 204508 / S288c</strain>
    </source>
</reference>
<reference key="6">
    <citation type="journal article" date="2003" name="Nature">
        <title>Global analysis of protein localization in budding yeast.</title>
        <authorList>
            <person name="Huh W.-K."/>
            <person name="Falvo J.V."/>
            <person name="Gerke L.C."/>
            <person name="Carroll A.S."/>
            <person name="Howson R.W."/>
            <person name="Weissman J.S."/>
            <person name="O'Shea E.K."/>
        </authorList>
    </citation>
    <scope>SUBCELLULAR LOCATION [LARGE SCALE ANALYSIS]</scope>
</reference>
<reference key="7">
    <citation type="journal article" date="2003" name="Nature">
        <title>Global analysis of protein expression in yeast.</title>
        <authorList>
            <person name="Ghaemmaghami S."/>
            <person name="Huh W.-K."/>
            <person name="Bower K."/>
            <person name="Howson R.W."/>
            <person name="Belle A."/>
            <person name="Dephoure N."/>
            <person name="O'Shea E.K."/>
            <person name="Weissman J.S."/>
        </authorList>
    </citation>
    <scope>LEVEL OF PROTEIN EXPRESSION [LARGE SCALE ANALYSIS]</scope>
</reference>
<reference key="8">
    <citation type="journal article" date="2003" name="Proc. Natl. Acad. Sci. U.S.A.">
        <title>The proteome of Saccharomyces cerevisiae mitochondria.</title>
        <authorList>
            <person name="Sickmann A."/>
            <person name="Reinders J."/>
            <person name="Wagner Y."/>
            <person name="Joppich C."/>
            <person name="Zahedi R.P."/>
            <person name="Meyer H.E."/>
            <person name="Schoenfisch B."/>
            <person name="Perschil I."/>
            <person name="Chacinska A."/>
            <person name="Guiard B."/>
            <person name="Rehling P."/>
            <person name="Pfanner N."/>
            <person name="Meisinger C."/>
        </authorList>
    </citation>
    <scope>SUBCELLULAR LOCATION [LARGE SCALE ANALYSIS]</scope>
    <source>
        <strain>ATCC 76625 / YPH499</strain>
    </source>
</reference>
<reference key="9">
    <citation type="journal article" date="2007" name="Mol. Cell. Proteomics">
        <title>Profiling phosphoproteins of yeast mitochondria reveals a role of phosphorylation in assembly of the ATP synthase.</title>
        <authorList>
            <person name="Reinders J."/>
            <person name="Wagner K."/>
            <person name="Zahedi R.P."/>
            <person name="Stojanovski D."/>
            <person name="Eyrich B."/>
            <person name="van der Laan M."/>
            <person name="Rehling P."/>
            <person name="Sickmann A."/>
            <person name="Pfanner N."/>
            <person name="Meisinger C."/>
        </authorList>
    </citation>
    <scope>PHOSPHORYLATION [LARGE SCALE ANALYSIS] AT THR-97</scope>
    <scope>IDENTIFICATION BY MASS SPECTROMETRY [LARGE SCALE ANALYSIS]</scope>
    <source>
        <strain>ATCC 76625 / YPH499</strain>
    </source>
</reference>
<reference key="10">
    <citation type="journal article" date="2012" name="Proc. Natl. Acad. Sci. U.S.A.">
        <title>N-terminal acetylome analyses and functional insights of the N-terminal acetyltransferase NatB.</title>
        <authorList>
            <person name="Van Damme P."/>
            <person name="Lasa M."/>
            <person name="Polevoda B."/>
            <person name="Gazquez C."/>
            <person name="Elosegui-Artola A."/>
            <person name="Kim D.S."/>
            <person name="De Juan-Pardo E."/>
            <person name="Demeyer K."/>
            <person name="Hole K."/>
            <person name="Larrea E."/>
            <person name="Timmerman E."/>
            <person name="Prieto J."/>
            <person name="Arnesen T."/>
            <person name="Sherman F."/>
            <person name="Gevaert K."/>
            <person name="Aldabe R."/>
        </authorList>
    </citation>
    <scope>ACETYLATION [LARGE SCALE ANALYSIS] AT SER-2</scope>
    <scope>CLEAVAGE OF INITIATOR METHIONINE [LARGE SCALE ANALYSIS]</scope>
    <scope>IDENTIFICATION BY MASS SPECTROMETRY [LARGE SCALE ANALYSIS]</scope>
</reference>
<accession>P07253</accession>
<accession>D6VQB8</accession>
<accession>E9P8V5</accession>
<feature type="initiator methionine" description="Removed" evidence="7">
    <location>
        <position position="1"/>
    </location>
</feature>
<feature type="chain" id="PRO_0000089381" description="Cytochrome B pre-mRNA-processing protein 6">
    <location>
        <begin position="2"/>
        <end position="162"/>
    </location>
</feature>
<feature type="modified residue" description="N-acetylserine" evidence="7">
    <location>
        <position position="2"/>
    </location>
</feature>
<feature type="modified residue" description="Phosphothreonine" evidence="6">
    <location>
        <position position="97"/>
    </location>
</feature>
<feature type="sequence conflict" description="In Ref. 5; AAS56509." evidence="5" ref="5">
    <original>S</original>
    <variation>Y</variation>
    <location>
        <position position="2"/>
    </location>
</feature>
<dbReference type="EMBL" id="M10154">
    <property type="protein sequence ID" value="AAA34476.1"/>
    <property type="molecule type" value="Genomic_DNA"/>
</dbReference>
<dbReference type="EMBL" id="X78993">
    <property type="protein sequence ID" value="CAA55622.1"/>
    <property type="molecule type" value="Genomic_DNA"/>
</dbReference>
<dbReference type="EMBL" id="Z35989">
    <property type="protein sequence ID" value="CAA85077.1"/>
    <property type="molecule type" value="Genomic_DNA"/>
</dbReference>
<dbReference type="EMBL" id="AY558183">
    <property type="protein sequence ID" value="AAS56509.1"/>
    <property type="molecule type" value="Genomic_DNA"/>
</dbReference>
<dbReference type="EMBL" id="BK006936">
    <property type="protein sequence ID" value="DAA07238.1"/>
    <property type="molecule type" value="Genomic_DNA"/>
</dbReference>
<dbReference type="PIR" id="A22596">
    <property type="entry name" value="A22596"/>
</dbReference>
<dbReference type="RefSeq" id="NP_009678.3">
    <property type="nucleotide sequence ID" value="NM_001178468.3"/>
</dbReference>
<dbReference type="BioGRID" id="32822">
    <property type="interactions" value="105"/>
</dbReference>
<dbReference type="ComplexPortal" id="CPX-384">
    <property type="entry name" value="CBP3-CBP6 complex"/>
</dbReference>
<dbReference type="DIP" id="DIP-5707N"/>
<dbReference type="FunCoup" id="P07253">
    <property type="interactions" value="179"/>
</dbReference>
<dbReference type="IntAct" id="P07253">
    <property type="interactions" value="5"/>
</dbReference>
<dbReference type="MINT" id="P07253"/>
<dbReference type="STRING" id="4932.YBR120C"/>
<dbReference type="iPTMnet" id="P07253"/>
<dbReference type="PaxDb" id="4932-YBR120C"/>
<dbReference type="PeptideAtlas" id="P07253"/>
<dbReference type="EnsemblFungi" id="YBR120C_mRNA">
    <property type="protein sequence ID" value="YBR120C"/>
    <property type="gene ID" value="YBR120C"/>
</dbReference>
<dbReference type="GeneID" id="852417"/>
<dbReference type="KEGG" id="sce:YBR120C"/>
<dbReference type="AGR" id="SGD:S000000324"/>
<dbReference type="SGD" id="S000000324">
    <property type="gene designation" value="CBP6"/>
</dbReference>
<dbReference type="VEuPathDB" id="FungiDB:YBR120C"/>
<dbReference type="eggNOG" id="ENOG502SAQZ">
    <property type="taxonomic scope" value="Eukaryota"/>
</dbReference>
<dbReference type="HOGENOM" id="CLU_149479_0_0_1"/>
<dbReference type="InParanoid" id="P07253"/>
<dbReference type="OMA" id="PRYYDRI"/>
<dbReference type="OrthoDB" id="2107880at2759"/>
<dbReference type="BioCyc" id="YEAST:G3O-29077-MONOMER"/>
<dbReference type="Reactome" id="R-SCE-9865878">
    <property type="pathway name" value="Complex III assembly"/>
</dbReference>
<dbReference type="BioGRID-ORCS" id="852417">
    <property type="hits" value="0 hits in 10 CRISPR screens"/>
</dbReference>
<dbReference type="PRO" id="PR:P07253"/>
<dbReference type="Proteomes" id="UP000002311">
    <property type="component" value="Chromosome II"/>
</dbReference>
<dbReference type="RNAct" id="P07253">
    <property type="molecule type" value="protein"/>
</dbReference>
<dbReference type="GO" id="GO:0061671">
    <property type="term" value="C:Cbp3p-Cbp6 complex"/>
    <property type="evidence" value="ECO:0000353"/>
    <property type="project" value="ComplexPortal"/>
</dbReference>
<dbReference type="GO" id="GO:0005759">
    <property type="term" value="C:mitochondrial matrix"/>
    <property type="evidence" value="ECO:0000304"/>
    <property type="project" value="Reactome"/>
</dbReference>
<dbReference type="GO" id="GO:0005761">
    <property type="term" value="C:mitochondrial ribosome"/>
    <property type="evidence" value="ECO:0000314"/>
    <property type="project" value="SGD"/>
</dbReference>
<dbReference type="GO" id="GO:0005739">
    <property type="term" value="C:mitochondrion"/>
    <property type="evidence" value="ECO:0000314"/>
    <property type="project" value="ComplexPortal"/>
</dbReference>
<dbReference type="GO" id="GO:0043022">
    <property type="term" value="F:ribosome binding"/>
    <property type="evidence" value="ECO:0000314"/>
    <property type="project" value="SGD"/>
</dbReference>
<dbReference type="GO" id="GO:0034551">
    <property type="term" value="P:mitochondrial respiratory chain complex III assembly"/>
    <property type="evidence" value="ECO:0000314"/>
    <property type="project" value="ComplexPortal"/>
</dbReference>
<dbReference type="GO" id="GO:0006397">
    <property type="term" value="P:mRNA processing"/>
    <property type="evidence" value="ECO:0007669"/>
    <property type="project" value="UniProtKB-KW"/>
</dbReference>
<dbReference type="GO" id="GO:0070131">
    <property type="term" value="P:positive regulation of mitochondrial translation"/>
    <property type="evidence" value="ECO:0000315"/>
    <property type="project" value="SGD"/>
</dbReference>
<dbReference type="GO" id="GO:0050821">
    <property type="term" value="P:protein stabilization"/>
    <property type="evidence" value="ECO:0000314"/>
    <property type="project" value="ComplexPortal"/>
</dbReference>
<dbReference type="InterPro" id="IPR037653">
    <property type="entry name" value="Cbp6"/>
</dbReference>
<dbReference type="PANTHER" id="PTHR28250">
    <property type="entry name" value="CYTOCHROME B PRE-MRNA-PROCESSING PROTEIN 6"/>
    <property type="match status" value="1"/>
</dbReference>
<dbReference type="PANTHER" id="PTHR28250:SF1">
    <property type="entry name" value="CYTOCHROME B PRE-MRNA-PROCESSING PROTEIN 6"/>
    <property type="match status" value="1"/>
</dbReference>
<dbReference type="Pfam" id="PF20180">
    <property type="entry name" value="UQCC2_CBP6"/>
    <property type="match status" value="1"/>
</dbReference>